<gene>
    <name evidence="4" type="primary">DEP3</name>
</gene>
<protein>
    <recommendedName>
        <fullName evidence="4">Efflux pump DEP3</fullName>
    </recommendedName>
    <alternativeName>
        <fullName evidence="4">Depudecin biosynthesis cluster protein 3</fullName>
    </alternativeName>
</protein>
<sequence>MVYSSTSSSQNRPDGEKHVEAVGSSTRIPSDELVDRGGGDTTTGKQSPRDIHGWKWATAYSAMLSTTLLFALDNTIVANIQPAIINDFGHLELLSWIGTGFALGTMFILLWGKVYGVFNIKWVYIFNIFLFEAGSALCGAAPNMAALIIGRVIAGVGGSGMYSGTLTYVSVLSNDQEKPAYLAGSTVVWGIGSVLGPVVGGAFAASSATWRWGFYVNLPIGAAFAPVYFLLFPSFDPYPSKTLAEKLRLVDWINAVIFLAGSACLTVVLTFGGVVYPFNSGTVIALWTVTGILLVAFIVLLKLHPLVAKENRLYPLHFFKQPTLINMQLQVFLSSGIILAMTYYVPLYFQFIKGDGALEAGVRLLPLIMFMVVASMVNGFLMPRYGLIPIWYIGGSSLALIGTALMYTVDDSTSNANIYGYNILIGAGTGSYIVAGFAIVQSLVPVHEIANAVGAMTIFQDLGMVLFLAISGSLFHNVAVDKVGKALPDVSHTEIANLIAGSSSKAFQALSDTEKALVIPEIASAMTTIWAFFLAAAALSVVCSFPLLKAKIGGMEKRTAITAA</sequence>
<accession>D2E9W8</accession>
<proteinExistence type="evidence at transcript level"/>
<comment type="function">
    <text evidence="3">Efflux pump; part of the gene cluster that mediates the biosynthesis of depudecin, a highly oxidized eleven-carbon linear polyketide that acts as a histone deacetylase (HDAC) inhibitor and makes a small contribution to pathogenesis (PubMed:19737099). Is presumed either to be responsible for exporting depudecin, to provide self-protection, or both (PubMed:19737099).</text>
</comment>
<comment type="subcellular location">
    <subcellularLocation>
        <location evidence="5">Cell membrane</location>
        <topology evidence="1">Multi-pass membrane protein</topology>
    </subcellularLocation>
</comment>
<comment type="induction">
    <text evidence="3">Expression is positively regulated by the depudecin biosynthesis cluster-specific transcription activator DEP6 (PubMed:19737099).</text>
</comment>
<comment type="similarity">
    <text evidence="5">Belongs to the major facilitator superfamily. TCR/Tet family.</text>
</comment>
<name>DEP3_ALTBR</name>
<evidence type="ECO:0000255" key="1"/>
<evidence type="ECO:0000256" key="2">
    <source>
        <dbReference type="SAM" id="MobiDB-lite"/>
    </source>
</evidence>
<evidence type="ECO:0000269" key="3">
    <source>
    </source>
</evidence>
<evidence type="ECO:0000303" key="4">
    <source>
    </source>
</evidence>
<evidence type="ECO:0000305" key="5"/>
<organism>
    <name type="scientific">Alternaria brassicicola</name>
    <name type="common">Dark leaf spot agent</name>
    <dbReference type="NCBI Taxonomy" id="29001"/>
    <lineage>
        <taxon>Eukaryota</taxon>
        <taxon>Fungi</taxon>
        <taxon>Dikarya</taxon>
        <taxon>Ascomycota</taxon>
        <taxon>Pezizomycotina</taxon>
        <taxon>Dothideomycetes</taxon>
        <taxon>Pleosporomycetidae</taxon>
        <taxon>Pleosporales</taxon>
        <taxon>Pleosporineae</taxon>
        <taxon>Pleosporaceae</taxon>
        <taxon>Alternaria</taxon>
        <taxon>Alternaria sect. Brassicicola</taxon>
    </lineage>
</organism>
<keyword id="KW-1003">Cell membrane</keyword>
<keyword id="KW-0472">Membrane</keyword>
<keyword id="KW-0812">Transmembrane</keyword>
<keyword id="KW-1133">Transmembrane helix</keyword>
<keyword id="KW-0813">Transport</keyword>
<reference key="1">
    <citation type="journal article" date="2009" name="Mol. Plant Microbe Interact.">
        <title>Biosynthesis and role in virulence of the histone deacetylase inhibitor depudecin from Alternaria brassicicola.</title>
        <authorList>
            <person name="Wight W.D."/>
            <person name="Kim K.-H."/>
            <person name="Lawrence C.B."/>
            <person name="Walton J.D."/>
        </authorList>
    </citation>
    <scope>NUCLEOTIDE SEQUENCE [GENOMIC DNA]</scope>
    <scope>FUNCTION</scope>
    <scope>INDUCTION</scope>
    <source>
        <strain>MUCL 202097</strain>
    </source>
</reference>
<dbReference type="EMBL" id="FJ977165">
    <property type="protein sequence ID" value="ACZ57546.1"/>
    <property type="molecule type" value="Genomic_DNA"/>
</dbReference>
<dbReference type="SMR" id="D2E9W8"/>
<dbReference type="PHI-base" id="PHI:2377"/>
<dbReference type="GO" id="GO:0005886">
    <property type="term" value="C:plasma membrane"/>
    <property type="evidence" value="ECO:0007669"/>
    <property type="project" value="UniProtKB-SubCell"/>
</dbReference>
<dbReference type="GO" id="GO:0022857">
    <property type="term" value="F:transmembrane transporter activity"/>
    <property type="evidence" value="ECO:0007669"/>
    <property type="project" value="InterPro"/>
</dbReference>
<dbReference type="CDD" id="cd17502">
    <property type="entry name" value="MFS_Azr1_MDR_like"/>
    <property type="match status" value="1"/>
</dbReference>
<dbReference type="FunFam" id="1.20.1250.20:FF:000429">
    <property type="entry name" value="MFS drug efflux transporter, putative"/>
    <property type="match status" value="1"/>
</dbReference>
<dbReference type="Gene3D" id="1.20.1250.20">
    <property type="entry name" value="MFS general substrate transporter like domains"/>
    <property type="match status" value="2"/>
</dbReference>
<dbReference type="InterPro" id="IPR011701">
    <property type="entry name" value="MFS"/>
</dbReference>
<dbReference type="InterPro" id="IPR020846">
    <property type="entry name" value="MFS_dom"/>
</dbReference>
<dbReference type="InterPro" id="IPR036259">
    <property type="entry name" value="MFS_trans_sf"/>
</dbReference>
<dbReference type="PANTHER" id="PTHR23501">
    <property type="entry name" value="MAJOR FACILITATOR SUPERFAMILY"/>
    <property type="match status" value="1"/>
</dbReference>
<dbReference type="PANTHER" id="PTHR23501:SF12">
    <property type="entry name" value="MAJOR FACILITATOR SUPERFAMILY (MFS) PROFILE DOMAIN-CONTAINING PROTEIN-RELATED"/>
    <property type="match status" value="1"/>
</dbReference>
<dbReference type="Pfam" id="PF07690">
    <property type="entry name" value="MFS_1"/>
    <property type="match status" value="1"/>
</dbReference>
<dbReference type="SUPFAM" id="SSF103473">
    <property type="entry name" value="MFS general substrate transporter"/>
    <property type="match status" value="2"/>
</dbReference>
<dbReference type="PROSITE" id="PS50850">
    <property type="entry name" value="MFS"/>
    <property type="match status" value="1"/>
</dbReference>
<feature type="chain" id="PRO_0000441939" description="Efflux pump DEP3">
    <location>
        <begin position="1"/>
        <end position="564"/>
    </location>
</feature>
<feature type="transmembrane region" description="Helical" evidence="1">
    <location>
        <begin position="65"/>
        <end position="85"/>
    </location>
</feature>
<feature type="transmembrane region" description="Helical" evidence="1">
    <location>
        <begin position="91"/>
        <end position="111"/>
    </location>
</feature>
<feature type="transmembrane region" description="Helical" evidence="1">
    <location>
        <begin position="122"/>
        <end position="142"/>
    </location>
</feature>
<feature type="transmembrane region" description="Helical" evidence="1">
    <location>
        <begin position="152"/>
        <end position="172"/>
    </location>
</feature>
<feature type="transmembrane region" description="Helical" evidence="1">
    <location>
        <begin position="185"/>
        <end position="205"/>
    </location>
</feature>
<feature type="transmembrane region" description="Helical" evidence="1">
    <location>
        <begin position="212"/>
        <end position="232"/>
    </location>
</feature>
<feature type="transmembrane region" description="Helical" evidence="1">
    <location>
        <begin position="255"/>
        <end position="275"/>
    </location>
</feature>
<feature type="transmembrane region" description="Helical" evidence="1">
    <location>
        <begin position="281"/>
        <end position="301"/>
    </location>
</feature>
<feature type="transmembrane region" description="Helical" evidence="1">
    <location>
        <begin position="332"/>
        <end position="352"/>
    </location>
</feature>
<feature type="transmembrane region" description="Helical" evidence="1">
    <location>
        <begin position="362"/>
        <end position="382"/>
    </location>
</feature>
<feature type="transmembrane region" description="Helical" evidence="1">
    <location>
        <begin position="386"/>
        <end position="406"/>
    </location>
</feature>
<feature type="transmembrane region" description="Helical" evidence="1">
    <location>
        <begin position="423"/>
        <end position="443"/>
    </location>
</feature>
<feature type="transmembrane region" description="Helical" evidence="1">
    <location>
        <begin position="452"/>
        <end position="472"/>
    </location>
</feature>
<feature type="transmembrane region" description="Helical" evidence="1">
    <location>
        <begin position="528"/>
        <end position="548"/>
    </location>
</feature>
<feature type="region of interest" description="Disordered" evidence="2">
    <location>
        <begin position="1"/>
        <end position="48"/>
    </location>
</feature>
<feature type="compositionally biased region" description="Polar residues" evidence="2">
    <location>
        <begin position="1"/>
        <end position="12"/>
    </location>
</feature>
<feature type="compositionally biased region" description="Basic and acidic residues" evidence="2">
    <location>
        <begin position="29"/>
        <end position="38"/>
    </location>
</feature>